<reference key="1">
    <citation type="journal article" date="2005" name="Anal. Chem.">
        <title>Characterization of toxins within crude venoms by combined use of Fourier transform mass spectrometry and cloning.</title>
        <authorList>
            <person name="Quinton L."/>
            <person name="Le Caer J.P."/>
            <person name="Phan G."/>
            <person name="Ligny-Lemaire C."/>
            <person name="Bourdais-Jomaron J."/>
            <person name="Ducancel F."/>
            <person name="Chamot-Rooke J."/>
        </authorList>
    </citation>
    <scope>NUCLEOTIDE SEQUENCE [MRNA]</scope>
    <scope>PROTEIN SEQUENCE OF 85-109</scope>
    <scope>MASS SPECTROMETRY</scope>
    <scope>PROBABLE RNA EDITING</scope>
    <source>
        <tissue>Venom</tissue>
        <tissue>Venom gland</tissue>
    </source>
</reference>
<reference key="2">
    <citation type="journal article" date="2012" name="Biochimie">
        <title>Pharmacological and structural characterization of long-sarafotoxins, a new family of endothelin-like peptides: role of the C-terminus extension.</title>
        <authorList>
            <person name="Mourier G."/>
            <person name="Hajj M."/>
            <person name="Cordier F."/>
            <person name="Zorba A."/>
            <person name="Gao X."/>
            <person name="Coskun T."/>
            <person name="Herbet A."/>
            <person name="Marcon E."/>
            <person name="Beau F."/>
            <person name="Delepierre M."/>
            <person name="Ducancel F."/>
            <person name="Servent D."/>
        </authorList>
    </citation>
    <scope>SYNTHESIS OF 85-109</scope>
    <scope>FUNCTION (SARAFOTOXIN-I3)</scope>
    <scope>STRUCTURE BY NMR OF 85-109</scope>
    <scope>DISULFIDE BONDS</scope>
    <scope>MUTAGENESIS OF 106-ILE--ASN-109</scope>
</reference>
<dbReference type="PDB" id="2LDE">
    <property type="method" value="NMR"/>
    <property type="chains" value="A=85-109"/>
</dbReference>
<dbReference type="PDBsum" id="2LDE"/>
<dbReference type="GO" id="GO:0005576">
    <property type="term" value="C:extracellular region"/>
    <property type="evidence" value="ECO:0007669"/>
    <property type="project" value="UniProtKB-SubCell"/>
</dbReference>
<dbReference type="GO" id="GO:0090729">
    <property type="term" value="F:toxin activity"/>
    <property type="evidence" value="ECO:0007669"/>
    <property type="project" value="UniProtKB-KW"/>
</dbReference>
<dbReference type="GO" id="GO:0019229">
    <property type="term" value="P:regulation of vasoconstriction"/>
    <property type="evidence" value="ECO:0007669"/>
    <property type="project" value="InterPro"/>
</dbReference>
<dbReference type="GO" id="GO:0042310">
    <property type="term" value="P:vasoconstriction"/>
    <property type="evidence" value="ECO:0007669"/>
    <property type="project" value="UniProtKB-KW"/>
</dbReference>
<dbReference type="InterPro" id="IPR019764">
    <property type="entry name" value="Endothelin_toxin_CS"/>
</dbReference>
<dbReference type="InterPro" id="IPR001928">
    <property type="entry name" value="Endothln-like_toxin"/>
</dbReference>
<dbReference type="Pfam" id="PF00322">
    <property type="entry name" value="Endothelin"/>
    <property type="match status" value="1"/>
</dbReference>
<dbReference type="SMART" id="SM00272">
    <property type="entry name" value="END"/>
    <property type="match status" value="1"/>
</dbReference>
<dbReference type="PROSITE" id="PS00270">
    <property type="entry name" value="ENDOTHELIN"/>
    <property type="match status" value="1"/>
</dbReference>
<name>SRTX1_ATRIR</name>
<keyword id="KW-0002">3D-structure</keyword>
<keyword id="KW-0123">Cardiotoxin</keyword>
<keyword id="KW-0165">Cleavage on pair of basic residues</keyword>
<keyword id="KW-0903">Direct protein sequencing</keyword>
<keyword id="KW-1015">Disulfide bond</keyword>
<keyword id="KW-1213">G-protein coupled receptor impairing toxin</keyword>
<keyword id="KW-0691">RNA editing</keyword>
<keyword id="KW-0964">Secreted</keyword>
<keyword id="KW-0732">Signal</keyword>
<keyword id="KW-0800">Toxin</keyword>
<keyword id="KW-0838">Vasoactive</keyword>
<keyword id="KW-0839">Vasoconstrictor</keyword>
<organism>
    <name type="scientific">Atractaspis irregularis</name>
    <name type="common">Variable burrowing asp</name>
    <name type="synonym">Elaps irregularis</name>
    <dbReference type="NCBI Taxonomy" id="512568"/>
    <lineage>
        <taxon>Eukaryota</taxon>
        <taxon>Metazoa</taxon>
        <taxon>Chordata</taxon>
        <taxon>Craniata</taxon>
        <taxon>Vertebrata</taxon>
        <taxon>Euteleostomi</taxon>
        <taxon>Lepidosauria</taxon>
        <taxon>Squamata</taxon>
        <taxon>Bifurcata</taxon>
        <taxon>Unidentata</taxon>
        <taxon>Episquamata</taxon>
        <taxon>Toxicofera</taxon>
        <taxon>Serpentes</taxon>
        <taxon>Colubroidea</taxon>
        <taxon>Lamprophiidae</taxon>
        <taxon>Atractaspidinae</taxon>
        <taxon>Atractaspis</taxon>
    </lineage>
</organism>
<accession>P0DJK0</accession>
<sequence length="118" mass="12722">MALLPRLAAGGLLLLLALAALDGKPAPPKLLQKLMDGGQRRSEDQAAAGRIIDYEDGDEPVAVSVGDTKQAARALSPLRKPQPLCSCTDMSDLECMNFCHKDVIWINRNRKPSPIQSS</sequence>
<feature type="signal peptide" evidence="2">
    <location>
        <begin position="1"/>
        <end position="23"/>
    </location>
</feature>
<feature type="propeptide" id="PRO_0000421164" evidence="3">
    <location>
        <begin position="24"/>
        <end position="84"/>
    </location>
</feature>
<feature type="peptide" id="PRO_0000421165" description="Sarafotoxin-i1">
    <location>
        <begin position="85"/>
        <end position="109"/>
    </location>
</feature>
<feature type="propeptide" id="PRO_0000421166">
    <location>
        <begin position="112"/>
        <end position="118"/>
    </location>
</feature>
<feature type="site" description="Endothelin-receptor binding site" evidence="1">
    <location>
        <position position="105"/>
    </location>
</feature>
<feature type="disulfide bond" evidence="1">
    <location>
        <begin position="85"/>
        <end position="99"/>
    </location>
</feature>
<feature type="disulfide bond" evidence="1">
    <location>
        <begin position="87"/>
        <end position="95"/>
    </location>
</feature>
<feature type="sequence variant" description="In RNA edited version, Sarafotoxin-i3.">
    <original>I</original>
    <variation>V</variation>
    <location>
        <position position="106"/>
    </location>
</feature>
<feature type="mutagenesis site" description="Drastic 4-orders or magnitude increase in affinity for ET-B receptors." evidence="4">
    <location>
        <begin position="106"/>
        <end position="109"/>
    </location>
</feature>
<protein>
    <recommendedName>
        <fullName>Sarafotoxin-i1</fullName>
        <shortName>SRTX-i1</shortName>
    </recommendedName>
    <alternativeName>
        <fullName>Sarafotoxin-i3</fullName>
        <shortName>SRTX-i3</shortName>
    </alternativeName>
</protein>
<proteinExistence type="evidence at protein level"/>
<comment type="function">
    <text evidence="1">Vasoconstrictor activity. These toxins cause cardiac arrest probably as a result of coronary vasospasm (By similarity).</text>
</comment>
<comment type="function">
    <text evidence="1 4">Sarafotoxin-i3: vasoconstrictor activity. Causes cardiac arrest probably as a result of coronary vasospasm (By similarity). Displays low agonistic activities towards endothelin-2 receptor (EDNRB) (displays affinity in the micromolar range).</text>
</comment>
<comment type="subcellular location">
    <subcellularLocation>
        <location>Secreted</location>
    </subcellularLocation>
</comment>
<comment type="tissue specificity">
    <text>Expressed by the venom gland.</text>
</comment>
<comment type="PTM">
    <text evidence="3">Different length molecules ranging from 15 (85-99) to 30 amino acids (85-114) have been found in the venom.</text>
</comment>
<comment type="RNA editing">
    <location>
        <position position="106" evidence="5"/>
    </location>
    <text evidence="5">RNA editing may explain why no precursor for this sequence have been cloned.</text>
</comment>
<comment type="mass spectrometry" mass="2972.2" method="Electrospray" evidence="3">
    <text>Monoisotopic mass, sarafotoxin-i1.</text>
</comment>
<comment type="mass spectrometry" mass="2958.2" method="Electrospray" evidence="3">
    <text>Monoisotopic mass, sarafotoxin-i3.</text>
</comment>
<comment type="similarity">
    <text evidence="5">Belongs to the endothelin/sarafotoxin family.</text>
</comment>
<evidence type="ECO:0000250" key="1"/>
<evidence type="ECO:0000255" key="2"/>
<evidence type="ECO:0000269" key="3">
    <source>
    </source>
</evidence>
<evidence type="ECO:0000269" key="4">
    <source>
    </source>
</evidence>
<evidence type="ECO:0000305" key="5"/>